<keyword id="KW-0963">Cytoplasm</keyword>
<keyword id="KW-0479">Metal-binding</keyword>
<keyword id="KW-1185">Reference proteome</keyword>
<keyword id="KW-0862">Zinc</keyword>
<keyword id="KW-0863">Zinc-finger</keyword>
<organism>
    <name type="scientific">Schizosaccharomyces pombe (strain 972 / ATCC 24843)</name>
    <name type="common">Fission yeast</name>
    <dbReference type="NCBI Taxonomy" id="284812"/>
    <lineage>
        <taxon>Eukaryota</taxon>
        <taxon>Fungi</taxon>
        <taxon>Dikarya</taxon>
        <taxon>Ascomycota</taxon>
        <taxon>Taphrinomycotina</taxon>
        <taxon>Schizosaccharomycetes</taxon>
        <taxon>Schizosaccharomycetales</taxon>
        <taxon>Schizosaccharomycetaceae</taxon>
        <taxon>Schizosaccharomyces</taxon>
    </lineage>
</organism>
<name>YGU5_SCHPO</name>
<sequence>MCKHVLNAQVSIRTACCRRWIDCIECHNEIADHPLLKTSELTLICKKCRKAFRIQFDQTMDESDEYCPNCDNHFVIDAITKVEKPKAPISPKLDLRMLNQEEKELEELLDETTRLG</sequence>
<comment type="subcellular location">
    <subcellularLocation>
        <location evidence="2">Cytoplasm</location>
    </subcellularLocation>
</comment>
<dbReference type="EMBL" id="CU329671">
    <property type="protein sequence ID" value="CAA17785.2"/>
    <property type="molecule type" value="Genomic_DNA"/>
</dbReference>
<dbReference type="PIR" id="T40344">
    <property type="entry name" value="T40344"/>
</dbReference>
<dbReference type="BioGRID" id="277013">
    <property type="interactions" value="2"/>
</dbReference>
<dbReference type="FunCoup" id="O43034">
    <property type="interactions" value="15"/>
</dbReference>
<dbReference type="STRING" id="284812.O43034"/>
<dbReference type="iPTMnet" id="O43034"/>
<dbReference type="PaxDb" id="4896-SPBC3B9.05.1"/>
<dbReference type="EnsemblFungi" id="SPBC3B9.05.1">
    <property type="protein sequence ID" value="SPBC3B9.05.1:pep"/>
    <property type="gene ID" value="SPBC3B9.05"/>
</dbReference>
<dbReference type="KEGG" id="spo:2540485"/>
<dbReference type="PomBase" id="SPBC3B9.05"/>
<dbReference type="VEuPathDB" id="FungiDB:SPBC3B9.05"/>
<dbReference type="eggNOG" id="KOG1940">
    <property type="taxonomic scope" value="Eukaryota"/>
</dbReference>
<dbReference type="HOGENOM" id="CLU_140539_0_0_1"/>
<dbReference type="InParanoid" id="O43034"/>
<dbReference type="OMA" id="HQEQESH"/>
<dbReference type="PhylomeDB" id="O43034"/>
<dbReference type="PRO" id="PR:O43034"/>
<dbReference type="Proteomes" id="UP000002485">
    <property type="component" value="Chromosome II"/>
</dbReference>
<dbReference type="GO" id="GO:0005758">
    <property type="term" value="C:mitochondrial intermembrane space"/>
    <property type="evidence" value="ECO:0000318"/>
    <property type="project" value="GO_Central"/>
</dbReference>
<dbReference type="GO" id="GO:0008270">
    <property type="term" value="F:zinc ion binding"/>
    <property type="evidence" value="ECO:0000318"/>
    <property type="project" value="GO_Central"/>
</dbReference>
<dbReference type="GO" id="GO:0045041">
    <property type="term" value="P:protein import into mitochondrial intermembrane space"/>
    <property type="evidence" value="ECO:0000318"/>
    <property type="project" value="GO_Central"/>
</dbReference>
<dbReference type="InterPro" id="IPR052604">
    <property type="entry name" value="Mito_Tim_assembly_helper"/>
</dbReference>
<dbReference type="InterPro" id="IPR008913">
    <property type="entry name" value="Znf_CHY"/>
</dbReference>
<dbReference type="InterPro" id="IPR037274">
    <property type="entry name" value="Znf_CHY_sf"/>
</dbReference>
<dbReference type="PANTHER" id="PTHR28082:SF2">
    <property type="entry name" value="CHY-TYPE DOMAIN-CONTAINING PROTEIN"/>
    <property type="match status" value="1"/>
</dbReference>
<dbReference type="PANTHER" id="PTHR28082">
    <property type="entry name" value="ZINC FINGER PROTEIN"/>
    <property type="match status" value="1"/>
</dbReference>
<dbReference type="Pfam" id="PF05495">
    <property type="entry name" value="zf-CHY"/>
    <property type="match status" value="1"/>
</dbReference>
<dbReference type="SUPFAM" id="SSF161219">
    <property type="entry name" value="CHY zinc finger-like"/>
    <property type="match status" value="1"/>
</dbReference>
<dbReference type="PROSITE" id="PS51266">
    <property type="entry name" value="ZF_CHY"/>
    <property type="match status" value="1"/>
</dbReference>
<feature type="chain" id="PRO_0000310738" description="Uncharacterized protein C3B9.05">
    <location>
        <begin position="1"/>
        <end position="116"/>
    </location>
</feature>
<feature type="zinc finger region" description="CHY-type" evidence="1">
    <location>
        <begin position="1"/>
        <end position="72"/>
    </location>
</feature>
<feature type="binding site" evidence="1">
    <location>
        <position position="2"/>
    </location>
    <ligand>
        <name>Zn(2+)</name>
        <dbReference type="ChEBI" id="CHEBI:29105"/>
        <label>1</label>
    </ligand>
</feature>
<feature type="binding site" evidence="1">
    <location>
        <position position="4"/>
    </location>
    <ligand>
        <name>Zn(2+)</name>
        <dbReference type="ChEBI" id="CHEBI:29105"/>
        <label>1</label>
    </ligand>
</feature>
<feature type="binding site" evidence="1">
    <location>
        <position position="16"/>
    </location>
    <ligand>
        <name>Zn(2+)</name>
        <dbReference type="ChEBI" id="CHEBI:29105"/>
        <label>2</label>
    </ligand>
</feature>
<feature type="binding site" evidence="1">
    <location>
        <position position="17"/>
    </location>
    <ligand>
        <name>Zn(2+)</name>
        <dbReference type="ChEBI" id="CHEBI:29105"/>
        <label>2</label>
    </ligand>
</feature>
<feature type="binding site" evidence="1">
    <location>
        <position position="23"/>
    </location>
    <ligand>
        <name>Zn(2+)</name>
        <dbReference type="ChEBI" id="CHEBI:29105"/>
        <label>1</label>
    </ligand>
</feature>
<feature type="binding site" evidence="1">
    <location>
        <position position="26"/>
    </location>
    <ligand>
        <name>Zn(2+)</name>
        <dbReference type="ChEBI" id="CHEBI:29105"/>
        <label>1</label>
    </ligand>
</feature>
<feature type="binding site" evidence="1">
    <location>
        <position position="27"/>
    </location>
    <ligand>
        <name>Zn(2+)</name>
        <dbReference type="ChEBI" id="CHEBI:29105"/>
        <label>2</label>
    </ligand>
</feature>
<feature type="binding site" evidence="1">
    <location>
        <position position="33"/>
    </location>
    <ligand>
        <name>Zn(2+)</name>
        <dbReference type="ChEBI" id="CHEBI:29105"/>
        <label>2</label>
    </ligand>
</feature>
<feature type="binding site" evidence="1">
    <location>
        <position position="45"/>
    </location>
    <ligand>
        <name>Zn(2+)</name>
        <dbReference type="ChEBI" id="CHEBI:29105"/>
        <label>3</label>
    </ligand>
</feature>
<feature type="binding site" evidence="1">
    <location>
        <position position="48"/>
    </location>
    <ligand>
        <name>Zn(2+)</name>
        <dbReference type="ChEBI" id="CHEBI:29105"/>
        <label>3</label>
    </ligand>
</feature>
<feature type="binding site" evidence="1">
    <location>
        <position position="67"/>
    </location>
    <ligand>
        <name>Zn(2+)</name>
        <dbReference type="ChEBI" id="CHEBI:29105"/>
        <label>3</label>
    </ligand>
</feature>
<feature type="binding site" evidence="1">
    <location>
        <position position="70"/>
    </location>
    <ligand>
        <name>Zn(2+)</name>
        <dbReference type="ChEBI" id="CHEBI:29105"/>
        <label>3</label>
    </ligand>
</feature>
<protein>
    <recommendedName>
        <fullName>Uncharacterized protein C3B9.05</fullName>
    </recommendedName>
</protein>
<proteinExistence type="predicted"/>
<gene>
    <name type="ORF">SPBC3B9.05</name>
</gene>
<evidence type="ECO:0000255" key="1">
    <source>
        <dbReference type="PROSITE-ProRule" id="PRU00601"/>
    </source>
</evidence>
<evidence type="ECO:0000305" key="2"/>
<reference key="1">
    <citation type="journal article" date="2002" name="Nature">
        <title>The genome sequence of Schizosaccharomyces pombe.</title>
        <authorList>
            <person name="Wood V."/>
            <person name="Gwilliam R."/>
            <person name="Rajandream M.A."/>
            <person name="Lyne M.H."/>
            <person name="Lyne R."/>
            <person name="Stewart A."/>
            <person name="Sgouros J.G."/>
            <person name="Peat N."/>
            <person name="Hayles J."/>
            <person name="Baker S.G."/>
            <person name="Basham D."/>
            <person name="Bowman S."/>
            <person name="Brooks K."/>
            <person name="Brown D."/>
            <person name="Brown S."/>
            <person name="Chillingworth T."/>
            <person name="Churcher C.M."/>
            <person name="Collins M."/>
            <person name="Connor R."/>
            <person name="Cronin A."/>
            <person name="Davis P."/>
            <person name="Feltwell T."/>
            <person name="Fraser A."/>
            <person name="Gentles S."/>
            <person name="Goble A."/>
            <person name="Hamlin N."/>
            <person name="Harris D.E."/>
            <person name="Hidalgo J."/>
            <person name="Hodgson G."/>
            <person name="Holroyd S."/>
            <person name="Hornsby T."/>
            <person name="Howarth S."/>
            <person name="Huckle E.J."/>
            <person name="Hunt S."/>
            <person name="Jagels K."/>
            <person name="James K.D."/>
            <person name="Jones L."/>
            <person name="Jones M."/>
            <person name="Leather S."/>
            <person name="McDonald S."/>
            <person name="McLean J."/>
            <person name="Mooney P."/>
            <person name="Moule S."/>
            <person name="Mungall K.L."/>
            <person name="Murphy L.D."/>
            <person name="Niblett D."/>
            <person name="Odell C."/>
            <person name="Oliver K."/>
            <person name="O'Neil S."/>
            <person name="Pearson D."/>
            <person name="Quail M.A."/>
            <person name="Rabbinowitsch E."/>
            <person name="Rutherford K.M."/>
            <person name="Rutter S."/>
            <person name="Saunders D."/>
            <person name="Seeger K."/>
            <person name="Sharp S."/>
            <person name="Skelton J."/>
            <person name="Simmonds M.N."/>
            <person name="Squares R."/>
            <person name="Squares S."/>
            <person name="Stevens K."/>
            <person name="Taylor K."/>
            <person name="Taylor R.G."/>
            <person name="Tivey A."/>
            <person name="Walsh S.V."/>
            <person name="Warren T."/>
            <person name="Whitehead S."/>
            <person name="Woodward J.R."/>
            <person name="Volckaert G."/>
            <person name="Aert R."/>
            <person name="Robben J."/>
            <person name="Grymonprez B."/>
            <person name="Weltjens I."/>
            <person name="Vanstreels E."/>
            <person name="Rieger M."/>
            <person name="Schaefer M."/>
            <person name="Mueller-Auer S."/>
            <person name="Gabel C."/>
            <person name="Fuchs M."/>
            <person name="Duesterhoeft A."/>
            <person name="Fritzc C."/>
            <person name="Holzer E."/>
            <person name="Moestl D."/>
            <person name="Hilbert H."/>
            <person name="Borzym K."/>
            <person name="Langer I."/>
            <person name="Beck A."/>
            <person name="Lehrach H."/>
            <person name="Reinhardt R."/>
            <person name="Pohl T.M."/>
            <person name="Eger P."/>
            <person name="Zimmermann W."/>
            <person name="Wedler H."/>
            <person name="Wambutt R."/>
            <person name="Purnelle B."/>
            <person name="Goffeau A."/>
            <person name="Cadieu E."/>
            <person name="Dreano S."/>
            <person name="Gloux S."/>
            <person name="Lelaure V."/>
            <person name="Mottier S."/>
            <person name="Galibert F."/>
            <person name="Aves S.J."/>
            <person name="Xiang Z."/>
            <person name="Hunt C."/>
            <person name="Moore K."/>
            <person name="Hurst S.M."/>
            <person name="Lucas M."/>
            <person name="Rochet M."/>
            <person name="Gaillardin C."/>
            <person name="Tallada V.A."/>
            <person name="Garzon A."/>
            <person name="Thode G."/>
            <person name="Daga R.R."/>
            <person name="Cruzado L."/>
            <person name="Jimenez J."/>
            <person name="Sanchez M."/>
            <person name="del Rey F."/>
            <person name="Benito J."/>
            <person name="Dominguez A."/>
            <person name="Revuelta J.L."/>
            <person name="Moreno S."/>
            <person name="Armstrong J."/>
            <person name="Forsburg S.L."/>
            <person name="Cerutti L."/>
            <person name="Lowe T."/>
            <person name="McCombie W.R."/>
            <person name="Paulsen I."/>
            <person name="Potashkin J."/>
            <person name="Shpakovski G.V."/>
            <person name="Ussery D."/>
            <person name="Barrell B.G."/>
            <person name="Nurse P."/>
        </authorList>
    </citation>
    <scope>NUCLEOTIDE SEQUENCE [LARGE SCALE GENOMIC DNA]</scope>
    <source>
        <strain>972 / ATCC 24843</strain>
    </source>
</reference>
<accession>O43034</accession>